<protein>
    <recommendedName>
        <fullName>UTP--glucose-1-phosphate uridylyltransferase 2</fullName>
        <ecNumber>2.7.7.9</ecNumber>
    </recommendedName>
    <alternativeName>
        <fullName>Alpha-D-glucosyl-1-phosphate uridylyltransferase 2</fullName>
    </alternativeName>
    <alternativeName>
        <fullName>UDP-glucose pyrophosphorylase 2</fullName>
        <shortName>UDPGP 2</shortName>
    </alternativeName>
    <alternativeName>
        <fullName>Uridine diphosphoglucose pyrophosphorylase 2</fullName>
    </alternativeName>
</protein>
<evidence type="ECO:0000305" key="1"/>
<dbReference type="EC" id="2.7.7.9"/>
<dbReference type="EMBL" id="AE009949">
    <property type="protein sequence ID" value="AAL97000.1"/>
    <property type="molecule type" value="Genomic_DNA"/>
</dbReference>
<dbReference type="SMR" id="P67070"/>
<dbReference type="KEGG" id="spm:spyM18_0210"/>
<dbReference type="HOGENOM" id="CLU_029499_1_2_9"/>
<dbReference type="UniPathway" id="UPA00215"/>
<dbReference type="GO" id="GO:0003983">
    <property type="term" value="F:UTP:glucose-1-phosphate uridylyltransferase activity"/>
    <property type="evidence" value="ECO:0007669"/>
    <property type="project" value="UniProtKB-EC"/>
</dbReference>
<dbReference type="GO" id="GO:0009058">
    <property type="term" value="P:biosynthetic process"/>
    <property type="evidence" value="ECO:0007669"/>
    <property type="project" value="InterPro"/>
</dbReference>
<dbReference type="GO" id="GO:0006011">
    <property type="term" value="P:UDP-alpha-D-glucose metabolic process"/>
    <property type="evidence" value="ECO:0007669"/>
    <property type="project" value="InterPro"/>
</dbReference>
<dbReference type="CDD" id="cd02541">
    <property type="entry name" value="UGPase_prokaryotic"/>
    <property type="match status" value="1"/>
</dbReference>
<dbReference type="Gene3D" id="3.90.550.10">
    <property type="entry name" value="Spore Coat Polysaccharide Biosynthesis Protein SpsA, Chain A"/>
    <property type="match status" value="1"/>
</dbReference>
<dbReference type="InterPro" id="IPR005771">
    <property type="entry name" value="GalU_uridylyltTrfase_bac/arc"/>
</dbReference>
<dbReference type="InterPro" id="IPR005835">
    <property type="entry name" value="NTP_transferase_dom"/>
</dbReference>
<dbReference type="InterPro" id="IPR029044">
    <property type="entry name" value="Nucleotide-diphossugar_trans"/>
</dbReference>
<dbReference type="NCBIfam" id="TIGR01099">
    <property type="entry name" value="galU"/>
    <property type="match status" value="1"/>
</dbReference>
<dbReference type="PANTHER" id="PTHR43197">
    <property type="entry name" value="UTP--GLUCOSE-1-PHOSPHATE URIDYLYLTRANSFERASE"/>
    <property type="match status" value="1"/>
</dbReference>
<dbReference type="PANTHER" id="PTHR43197:SF1">
    <property type="entry name" value="UTP--GLUCOSE-1-PHOSPHATE URIDYLYLTRANSFERASE"/>
    <property type="match status" value="1"/>
</dbReference>
<dbReference type="Pfam" id="PF00483">
    <property type="entry name" value="NTP_transferase"/>
    <property type="match status" value="1"/>
</dbReference>
<dbReference type="SUPFAM" id="SSF53448">
    <property type="entry name" value="Nucleotide-diphospho-sugar transferases"/>
    <property type="match status" value="1"/>
</dbReference>
<reference key="1">
    <citation type="journal article" date="2002" name="Proc. Natl. Acad. Sci. U.S.A.">
        <title>Genome sequence and comparative microarray analysis of serotype M18 group A Streptococcus strains associated with acute rheumatic fever outbreaks.</title>
        <authorList>
            <person name="Smoot J.C."/>
            <person name="Barbian K.D."/>
            <person name="Van Gompel J.J."/>
            <person name="Smoot L.M."/>
            <person name="Chaussee M.S."/>
            <person name="Sylva G.L."/>
            <person name="Sturdevant D.E."/>
            <person name="Ricklefs S.M."/>
            <person name="Porcella S.F."/>
            <person name="Parkins L.D."/>
            <person name="Beres S.B."/>
            <person name="Campbell D.S."/>
            <person name="Smith T.M."/>
            <person name="Zhang Q."/>
            <person name="Kapur V."/>
            <person name="Daly J.A."/>
            <person name="Veasy L.G."/>
            <person name="Musser J.M."/>
        </authorList>
    </citation>
    <scope>NUCLEOTIDE SEQUENCE [LARGE SCALE GENOMIC DNA]</scope>
    <source>
        <strain>MGAS8232</strain>
    </source>
</reference>
<accession>P67070</accession>
<accession>P58098</accession>
<organism>
    <name type="scientific">Streptococcus pyogenes serotype M18 (strain MGAS8232)</name>
    <dbReference type="NCBI Taxonomy" id="186103"/>
    <lineage>
        <taxon>Bacteria</taxon>
        <taxon>Bacillati</taxon>
        <taxon>Bacillota</taxon>
        <taxon>Bacilli</taxon>
        <taxon>Lactobacillales</taxon>
        <taxon>Streptococcaceae</taxon>
        <taxon>Streptococcus</taxon>
    </lineage>
</organism>
<sequence length="299" mass="33302">MTKVRKAIIPAAGLGTRFLPATKALAKEMLPIVDKPTIQFIVEEALKSGIEEILIVTGKSKRSIEDHFDSNFELEYNLQAKGKIELLKLVDETTSINLHFIRQSHPRGLGDAVLQAKTFVGNEPFVVMLGDDLMDITNPNVKPLTKQLIDDYEETHAATIAVMRVPHEDVSNYGIIAPQAKAVKGLYSVDTFVEKPQPQDAPSDLAIIGRYLLTPEIFSILEKQEPGAGNEVQLTDAIDTLNKTQRVFAREFKGKRYDVGDKFGFMKTSLDYALKHPQVKDDLKAYIIQLGKALEKTKP</sequence>
<name>HASC2_STRP8</name>
<keyword id="KW-0548">Nucleotidyltransferase</keyword>
<keyword id="KW-0808">Transferase</keyword>
<comment type="catalytic activity">
    <reaction>
        <text>alpha-D-glucose 1-phosphate + UTP + H(+) = UDP-alpha-D-glucose + diphosphate</text>
        <dbReference type="Rhea" id="RHEA:19889"/>
        <dbReference type="ChEBI" id="CHEBI:15378"/>
        <dbReference type="ChEBI" id="CHEBI:33019"/>
        <dbReference type="ChEBI" id="CHEBI:46398"/>
        <dbReference type="ChEBI" id="CHEBI:58601"/>
        <dbReference type="ChEBI" id="CHEBI:58885"/>
        <dbReference type="EC" id="2.7.7.9"/>
    </reaction>
</comment>
<comment type="pathway">
    <text>Carbohydrate metabolism; nucleotide-sugar metabolism.</text>
</comment>
<comment type="similarity">
    <text evidence="1">Belongs to the UDPGP type 2 family.</text>
</comment>
<gene>
    <name type="primary">hasC2</name>
    <name type="synonym">hasC.2</name>
    <name type="ordered locus">spyM18_0210</name>
</gene>
<feature type="chain" id="PRO_0000201375" description="UTP--glucose-1-phosphate uridylyltransferase 2">
    <location>
        <begin position="1"/>
        <end position="299"/>
    </location>
</feature>
<proteinExistence type="inferred from homology"/>